<name>TRMB_DROAN</name>
<feature type="chain" id="PRO_0000370568" description="tRNA (guanine-N(7)-)-methyltransferase">
    <location>
        <begin position="1"/>
        <end position="257"/>
    </location>
</feature>
<feature type="region of interest" description="Disordered" evidence="2">
    <location>
        <begin position="1"/>
        <end position="25"/>
    </location>
</feature>
<feature type="compositionally biased region" description="Acidic residues" evidence="2">
    <location>
        <begin position="1"/>
        <end position="12"/>
    </location>
</feature>
<feature type="active site" evidence="1">
    <location>
        <position position="161"/>
    </location>
</feature>
<feature type="binding site" evidence="1">
    <location>
        <position position="80"/>
    </location>
    <ligand>
        <name>S-adenosyl-L-methionine</name>
        <dbReference type="ChEBI" id="CHEBI:59789"/>
    </ligand>
</feature>
<feature type="binding site" evidence="1">
    <location>
        <begin position="103"/>
        <end position="104"/>
    </location>
    <ligand>
        <name>S-adenosyl-L-methionine</name>
        <dbReference type="ChEBI" id="CHEBI:59789"/>
    </ligand>
</feature>
<feature type="binding site" evidence="1">
    <location>
        <begin position="138"/>
        <end position="139"/>
    </location>
    <ligand>
        <name>S-adenosyl-L-methionine</name>
        <dbReference type="ChEBI" id="CHEBI:59789"/>
    </ligand>
</feature>
<feature type="binding site" evidence="1">
    <location>
        <position position="158"/>
    </location>
    <ligand>
        <name>S-adenosyl-L-methionine</name>
        <dbReference type="ChEBI" id="CHEBI:59789"/>
    </ligand>
</feature>
<feature type="binding site" evidence="1">
    <location>
        <begin position="236"/>
        <end position="238"/>
    </location>
    <ligand>
        <name>S-adenosyl-L-methionine</name>
        <dbReference type="ChEBI" id="CHEBI:59789"/>
    </ligand>
</feature>
<reference key="1">
    <citation type="journal article" date="2007" name="Nature">
        <title>Evolution of genes and genomes on the Drosophila phylogeny.</title>
        <authorList>
            <consortium name="Drosophila 12 genomes consortium"/>
        </authorList>
    </citation>
    <scope>NUCLEOTIDE SEQUENCE [LARGE SCALE GENOMIC DNA]</scope>
    <source>
        <strain>Tucson 14024-0371.13</strain>
    </source>
</reference>
<gene>
    <name type="ORF">GF21935</name>
</gene>
<keyword id="KW-0489">Methyltransferase</keyword>
<keyword id="KW-0539">Nucleus</keyword>
<keyword id="KW-1185">Reference proteome</keyword>
<keyword id="KW-0694">RNA-binding</keyword>
<keyword id="KW-0949">S-adenosyl-L-methionine</keyword>
<keyword id="KW-0808">Transferase</keyword>
<keyword id="KW-0819">tRNA processing</keyword>
<keyword id="KW-0820">tRNA-binding</keyword>
<proteinExistence type="inferred from homology"/>
<evidence type="ECO:0000255" key="1">
    <source>
        <dbReference type="HAMAP-Rule" id="MF_03055"/>
    </source>
</evidence>
<evidence type="ECO:0000256" key="2">
    <source>
        <dbReference type="SAM" id="MobiDB-lite"/>
    </source>
</evidence>
<accession>B3MYY4</accession>
<comment type="function">
    <text evidence="1">Catalyzes the formation of N(7)-methylguanine at position 46 (m7G46) in tRNA.</text>
</comment>
<comment type="catalytic activity">
    <reaction evidence="1">
        <text>guanosine(46) in tRNA + S-adenosyl-L-methionine = N(7)-methylguanosine(46) in tRNA + S-adenosyl-L-homocysteine</text>
        <dbReference type="Rhea" id="RHEA:42708"/>
        <dbReference type="Rhea" id="RHEA-COMP:10188"/>
        <dbReference type="Rhea" id="RHEA-COMP:10189"/>
        <dbReference type="ChEBI" id="CHEBI:57856"/>
        <dbReference type="ChEBI" id="CHEBI:59789"/>
        <dbReference type="ChEBI" id="CHEBI:74269"/>
        <dbReference type="ChEBI" id="CHEBI:74480"/>
        <dbReference type="EC" id="2.1.1.33"/>
    </reaction>
</comment>
<comment type="pathway">
    <text evidence="1">tRNA modification; N(7)-methylguanine-tRNA biosynthesis.</text>
</comment>
<comment type="subcellular location">
    <subcellularLocation>
        <location evidence="1">Nucleus</location>
    </subcellularLocation>
</comment>
<comment type="similarity">
    <text evidence="1">Belongs to the class I-like SAM-binding methyltransferase superfamily. TrmB family.</text>
</comment>
<organism>
    <name type="scientific">Drosophila ananassae</name>
    <name type="common">Fruit fly</name>
    <dbReference type="NCBI Taxonomy" id="7217"/>
    <lineage>
        <taxon>Eukaryota</taxon>
        <taxon>Metazoa</taxon>
        <taxon>Ecdysozoa</taxon>
        <taxon>Arthropoda</taxon>
        <taxon>Hexapoda</taxon>
        <taxon>Insecta</taxon>
        <taxon>Pterygota</taxon>
        <taxon>Neoptera</taxon>
        <taxon>Endopterygota</taxon>
        <taxon>Diptera</taxon>
        <taxon>Brachycera</taxon>
        <taxon>Muscomorpha</taxon>
        <taxon>Ephydroidea</taxon>
        <taxon>Drosophilidae</taxon>
        <taxon>Drosophila</taxon>
        <taxon>Sophophora</taxon>
    </lineage>
</organism>
<protein>
    <recommendedName>
        <fullName evidence="1">tRNA (guanine-N(7)-)-methyltransferase</fullName>
        <ecNumber evidence="1">2.1.1.33</ecNumber>
    </recommendedName>
    <alternativeName>
        <fullName evidence="1">tRNA (guanine(46)-N(7))-methyltransferase</fullName>
    </alternativeName>
    <alternativeName>
        <fullName evidence="1">tRNA(m7G46)-methyltransferase</fullName>
    </alternativeName>
</protein>
<sequence length="257" mass="29691">MARDSEDQDMETETNGAAEGLDPTSAVTGLPQKRFYRQRAHSNPIADHSFDYPARPEDVNWRALYPSIQPDQKVTFADIGCGYGGFLVTLGEMFPEKFSIGMEIRVKVSDYVMDRITALRHKSGEAGAYKNIACLRTNAMKYLPNYFAKGQLEKMFFLYPDPHFKRAKHKWRIINQALLSEYAYVLKKGGLVYTMTDVEDLHQWIVQHMEEHPLYERLKEEEEQSDPITPKLYQSSEEGAKVVRNKGDHFLAIFRRL</sequence>
<dbReference type="EC" id="2.1.1.33" evidence="1"/>
<dbReference type="EMBL" id="CH902632">
    <property type="protein sequence ID" value="EDV32828.1"/>
    <property type="molecule type" value="Genomic_DNA"/>
</dbReference>
<dbReference type="SMR" id="B3MYY4"/>
<dbReference type="FunCoup" id="B3MYY4">
    <property type="interactions" value="998"/>
</dbReference>
<dbReference type="STRING" id="7217.B3MYY4"/>
<dbReference type="EnsemblMetazoa" id="FBtr0126635">
    <property type="protein sequence ID" value="FBpp0125127"/>
    <property type="gene ID" value="FBgn0098935"/>
</dbReference>
<dbReference type="EnsemblMetazoa" id="XM_001966504.4">
    <property type="protein sequence ID" value="XP_001966540.1"/>
    <property type="gene ID" value="LOC6504605"/>
</dbReference>
<dbReference type="GeneID" id="6504605"/>
<dbReference type="KEGG" id="dan:6504605"/>
<dbReference type="eggNOG" id="KOG3115">
    <property type="taxonomic scope" value="Eukaryota"/>
</dbReference>
<dbReference type="HOGENOM" id="CLU_050910_3_0_1"/>
<dbReference type="InParanoid" id="B3MYY4"/>
<dbReference type="OMA" id="LPNYFAK"/>
<dbReference type="OrthoDB" id="47276at2759"/>
<dbReference type="PhylomeDB" id="B3MYY4"/>
<dbReference type="UniPathway" id="UPA00989"/>
<dbReference type="Proteomes" id="UP000007801">
    <property type="component" value="Unassembled WGS sequence"/>
</dbReference>
<dbReference type="GO" id="GO:0005634">
    <property type="term" value="C:nucleus"/>
    <property type="evidence" value="ECO:0007669"/>
    <property type="project" value="UniProtKB-SubCell"/>
</dbReference>
<dbReference type="GO" id="GO:0043527">
    <property type="term" value="C:tRNA methyltransferase complex"/>
    <property type="evidence" value="ECO:0007669"/>
    <property type="project" value="TreeGrafter"/>
</dbReference>
<dbReference type="GO" id="GO:0008176">
    <property type="term" value="F:tRNA (guanine(46)-N7)-methyltransferase activity"/>
    <property type="evidence" value="ECO:0007669"/>
    <property type="project" value="UniProtKB-UniRule"/>
</dbReference>
<dbReference type="GO" id="GO:0000049">
    <property type="term" value="F:tRNA binding"/>
    <property type="evidence" value="ECO:0007669"/>
    <property type="project" value="UniProtKB-UniRule"/>
</dbReference>
<dbReference type="FunFam" id="3.40.50.150:FF:000060">
    <property type="entry name" value="tRNA (guanine-N(7)-)-methyltransferase"/>
    <property type="match status" value="1"/>
</dbReference>
<dbReference type="Gene3D" id="3.40.50.150">
    <property type="entry name" value="Vaccinia Virus protein VP39"/>
    <property type="match status" value="1"/>
</dbReference>
<dbReference type="HAMAP" id="MF_03055">
    <property type="entry name" value="tRNA_methyltr_TrmB_euk"/>
    <property type="match status" value="1"/>
</dbReference>
<dbReference type="InterPro" id="IPR029063">
    <property type="entry name" value="SAM-dependent_MTases_sf"/>
</dbReference>
<dbReference type="InterPro" id="IPR025763">
    <property type="entry name" value="Trm8_euk"/>
</dbReference>
<dbReference type="InterPro" id="IPR003358">
    <property type="entry name" value="tRNA_(Gua-N-7)_MeTrfase_Trmb"/>
</dbReference>
<dbReference type="NCBIfam" id="TIGR00091">
    <property type="entry name" value="tRNA (guanosine(46)-N7)-methyltransferase TrmB"/>
    <property type="match status" value="1"/>
</dbReference>
<dbReference type="PANTHER" id="PTHR23417">
    <property type="entry name" value="3-DEOXY-D-MANNO-OCTULOSONIC-ACID TRANSFERASE/TRNA GUANINE-N 7 - -METHYLTRANSFERASE"/>
    <property type="match status" value="1"/>
</dbReference>
<dbReference type="PANTHER" id="PTHR23417:SF16">
    <property type="entry name" value="TRNA (GUANINE-N(7)-)-METHYLTRANSFERASE"/>
    <property type="match status" value="1"/>
</dbReference>
<dbReference type="Pfam" id="PF02390">
    <property type="entry name" value="Methyltransf_4"/>
    <property type="match status" value="1"/>
</dbReference>
<dbReference type="SUPFAM" id="SSF53335">
    <property type="entry name" value="S-adenosyl-L-methionine-dependent methyltransferases"/>
    <property type="match status" value="1"/>
</dbReference>
<dbReference type="PROSITE" id="PS51625">
    <property type="entry name" value="SAM_MT_TRMB"/>
    <property type="match status" value="1"/>
</dbReference>